<keyword id="KW-0963">Cytoplasm</keyword>
<keyword id="KW-0489">Methyltransferase</keyword>
<keyword id="KW-1185">Reference proteome</keyword>
<keyword id="KW-0698">rRNA processing</keyword>
<keyword id="KW-0949">S-adenosyl-L-methionine</keyword>
<keyword id="KW-0808">Transferase</keyword>
<gene>
    <name evidence="1" type="primary">rsmC</name>
    <name type="ordered locus">VC_0623</name>
</gene>
<reference key="1">
    <citation type="journal article" date="2000" name="Nature">
        <title>DNA sequence of both chromosomes of the cholera pathogen Vibrio cholerae.</title>
        <authorList>
            <person name="Heidelberg J.F."/>
            <person name="Eisen J.A."/>
            <person name="Nelson W.C."/>
            <person name="Clayton R.A."/>
            <person name="Gwinn M.L."/>
            <person name="Dodson R.J."/>
            <person name="Haft D.H."/>
            <person name="Hickey E.K."/>
            <person name="Peterson J.D."/>
            <person name="Umayam L.A."/>
            <person name="Gill S.R."/>
            <person name="Nelson K.E."/>
            <person name="Read T.D."/>
            <person name="Tettelin H."/>
            <person name="Richardson D.L."/>
            <person name="Ermolaeva M.D."/>
            <person name="Vamathevan J.J."/>
            <person name="Bass S."/>
            <person name="Qin H."/>
            <person name="Dragoi I."/>
            <person name="Sellers P."/>
            <person name="McDonald L.A."/>
            <person name="Utterback T.R."/>
            <person name="Fleischmann R.D."/>
            <person name="Nierman W.C."/>
            <person name="White O."/>
            <person name="Salzberg S.L."/>
            <person name="Smith H.O."/>
            <person name="Colwell R.R."/>
            <person name="Mekalanos J.J."/>
            <person name="Venter J.C."/>
            <person name="Fraser C.M."/>
        </authorList>
    </citation>
    <scope>NUCLEOTIDE SEQUENCE [LARGE SCALE GENOMIC DNA]</scope>
    <source>
        <strain>ATCC 39315 / El Tor Inaba N16961</strain>
    </source>
</reference>
<evidence type="ECO:0000255" key="1">
    <source>
        <dbReference type="HAMAP-Rule" id="MF_01862"/>
    </source>
</evidence>
<protein>
    <recommendedName>
        <fullName evidence="1">Ribosomal RNA small subunit methyltransferase C</fullName>
        <ecNumber evidence="1">2.1.1.172</ecNumber>
    </recommendedName>
    <alternativeName>
        <fullName evidence="1">16S rRNA m2G1207 methyltransferase</fullName>
    </alternativeName>
    <alternativeName>
        <fullName evidence="1">rRNA (guanine-N(2)-)-methyltransferase RsmC</fullName>
    </alternativeName>
</protein>
<proteinExistence type="inferred from homology"/>
<accession>Q9KUA0</accession>
<organism>
    <name type="scientific">Vibrio cholerae serotype O1 (strain ATCC 39315 / El Tor Inaba N16961)</name>
    <dbReference type="NCBI Taxonomy" id="243277"/>
    <lineage>
        <taxon>Bacteria</taxon>
        <taxon>Pseudomonadati</taxon>
        <taxon>Pseudomonadota</taxon>
        <taxon>Gammaproteobacteria</taxon>
        <taxon>Vibrionales</taxon>
        <taxon>Vibrionaceae</taxon>
        <taxon>Vibrio</taxon>
    </lineage>
</organism>
<sequence length="340" mass="37911">MQPYTAPSEIALRQLDYFADKHVLVAGEVEDRFPIELRQYCASVSVFTTHYGYYSQLKAYPEITRYFGEQLTADLNADLILLYWPKAKQEAEYLLAMLLAKLGTGTEIVVVGENRSGVKSIEKMFAAYGPIHKYDSARRCSFYWGHCVHTPAAFDIEQWFKSYAVDYQGHELTIRSLPGVFSHGEFDLGSRLLLDTLPPLSGKVIDIGSGAGVLGCVMAKLNPHIELEMTDISALAIRSSQETLVANQLHGHVYPSDMFSDTGHHYNYIVTNPPFHSGLETSYSATERLLAESVDHLASGGSIWVVANSFLKYPPILEQAFGHCDIAAKTNKFAIYHAKK</sequence>
<name>RSMC_VIBCH</name>
<feature type="chain" id="PRO_0000369791" description="Ribosomal RNA small subunit methyltransferase C">
    <location>
        <begin position="1"/>
        <end position="340"/>
    </location>
</feature>
<comment type="function">
    <text evidence="1">Specifically methylates the guanine in position 1207 of 16S rRNA in the 30S particle.</text>
</comment>
<comment type="catalytic activity">
    <reaction evidence="1">
        <text>guanosine(1207) in 16S rRNA + S-adenosyl-L-methionine = N(2)-methylguanosine(1207) in 16S rRNA + S-adenosyl-L-homocysteine + H(+)</text>
        <dbReference type="Rhea" id="RHEA:42736"/>
        <dbReference type="Rhea" id="RHEA-COMP:10213"/>
        <dbReference type="Rhea" id="RHEA-COMP:10214"/>
        <dbReference type="ChEBI" id="CHEBI:15378"/>
        <dbReference type="ChEBI" id="CHEBI:57856"/>
        <dbReference type="ChEBI" id="CHEBI:59789"/>
        <dbReference type="ChEBI" id="CHEBI:74269"/>
        <dbReference type="ChEBI" id="CHEBI:74481"/>
        <dbReference type="EC" id="2.1.1.172"/>
    </reaction>
</comment>
<comment type="subunit">
    <text evidence="1">Monomer.</text>
</comment>
<comment type="subcellular location">
    <subcellularLocation>
        <location evidence="1">Cytoplasm</location>
    </subcellularLocation>
</comment>
<comment type="similarity">
    <text evidence="1">Belongs to the methyltransferase superfamily. RsmC family.</text>
</comment>
<dbReference type="EC" id="2.1.1.172" evidence="1"/>
<dbReference type="EMBL" id="AE003852">
    <property type="protein sequence ID" value="AAF93789.1"/>
    <property type="molecule type" value="Genomic_DNA"/>
</dbReference>
<dbReference type="PIR" id="B82300">
    <property type="entry name" value="B82300"/>
</dbReference>
<dbReference type="RefSeq" id="NP_230272.1">
    <property type="nucleotide sequence ID" value="NC_002505.1"/>
</dbReference>
<dbReference type="RefSeq" id="WP_001183380.1">
    <property type="nucleotide sequence ID" value="NZ_LT906614.1"/>
</dbReference>
<dbReference type="SMR" id="Q9KUA0"/>
<dbReference type="STRING" id="243277.VC_0623"/>
<dbReference type="DNASU" id="2615411"/>
<dbReference type="EnsemblBacteria" id="AAF93789">
    <property type="protein sequence ID" value="AAF93789"/>
    <property type="gene ID" value="VC_0623"/>
</dbReference>
<dbReference type="KEGG" id="vch:VC_0623"/>
<dbReference type="PATRIC" id="fig|243277.26.peg.593"/>
<dbReference type="eggNOG" id="COG2813">
    <property type="taxonomic scope" value="Bacteria"/>
</dbReference>
<dbReference type="HOGENOM" id="CLU_049581_0_1_6"/>
<dbReference type="Proteomes" id="UP000000584">
    <property type="component" value="Chromosome 1"/>
</dbReference>
<dbReference type="GO" id="GO:0005737">
    <property type="term" value="C:cytoplasm"/>
    <property type="evidence" value="ECO:0007669"/>
    <property type="project" value="UniProtKB-SubCell"/>
</dbReference>
<dbReference type="GO" id="GO:0052914">
    <property type="term" value="F:16S rRNA (guanine(1207)-N(2))-methyltransferase activity"/>
    <property type="evidence" value="ECO:0007669"/>
    <property type="project" value="UniProtKB-EC"/>
</dbReference>
<dbReference type="GO" id="GO:0003676">
    <property type="term" value="F:nucleic acid binding"/>
    <property type="evidence" value="ECO:0007669"/>
    <property type="project" value="InterPro"/>
</dbReference>
<dbReference type="GO" id="GO:0008990">
    <property type="term" value="F:rRNA (guanine-N2-)-methyltransferase activity"/>
    <property type="evidence" value="ECO:0000318"/>
    <property type="project" value="GO_Central"/>
</dbReference>
<dbReference type="GO" id="GO:0070475">
    <property type="term" value="P:rRNA base methylation"/>
    <property type="evidence" value="ECO:0000318"/>
    <property type="project" value="GO_Central"/>
</dbReference>
<dbReference type="CDD" id="cd02440">
    <property type="entry name" value="AdoMet_MTases"/>
    <property type="match status" value="1"/>
</dbReference>
<dbReference type="Gene3D" id="3.40.50.150">
    <property type="entry name" value="Vaccinia Virus protein VP39"/>
    <property type="match status" value="2"/>
</dbReference>
<dbReference type="HAMAP" id="MF_01862">
    <property type="entry name" value="16SrRNA_methyltr_C"/>
    <property type="match status" value="1"/>
</dbReference>
<dbReference type="InterPro" id="IPR002052">
    <property type="entry name" value="DNA_methylase_N6_adenine_CS"/>
</dbReference>
<dbReference type="InterPro" id="IPR013675">
    <property type="entry name" value="Mtase_sm_N"/>
</dbReference>
<dbReference type="InterPro" id="IPR023543">
    <property type="entry name" value="rRNA_ssu_MeTfrase_C"/>
</dbReference>
<dbReference type="InterPro" id="IPR046977">
    <property type="entry name" value="RsmC/RlmG"/>
</dbReference>
<dbReference type="InterPro" id="IPR029063">
    <property type="entry name" value="SAM-dependent_MTases_sf"/>
</dbReference>
<dbReference type="InterPro" id="IPR007848">
    <property type="entry name" value="Small_mtfrase_dom"/>
</dbReference>
<dbReference type="NCBIfam" id="NF007023">
    <property type="entry name" value="PRK09489.1"/>
    <property type="match status" value="1"/>
</dbReference>
<dbReference type="PANTHER" id="PTHR47816">
    <property type="entry name" value="RIBOSOMAL RNA SMALL SUBUNIT METHYLTRANSFERASE C"/>
    <property type="match status" value="1"/>
</dbReference>
<dbReference type="PANTHER" id="PTHR47816:SF4">
    <property type="entry name" value="RIBOSOMAL RNA SMALL SUBUNIT METHYLTRANSFERASE C"/>
    <property type="match status" value="1"/>
</dbReference>
<dbReference type="Pfam" id="PF05175">
    <property type="entry name" value="MTS"/>
    <property type="match status" value="1"/>
</dbReference>
<dbReference type="Pfam" id="PF08468">
    <property type="entry name" value="MTS_N"/>
    <property type="match status" value="1"/>
</dbReference>
<dbReference type="SUPFAM" id="SSF53335">
    <property type="entry name" value="S-adenosyl-L-methionine-dependent methyltransferases"/>
    <property type="match status" value="1"/>
</dbReference>